<feature type="chain" id="PRO_1000090153" description="SsrA-binding protein">
    <location>
        <begin position="1"/>
        <end position="157"/>
    </location>
</feature>
<feature type="region of interest" description="Disordered" evidence="2">
    <location>
        <begin position="132"/>
        <end position="157"/>
    </location>
</feature>
<feature type="compositionally biased region" description="Basic and acidic residues" evidence="2">
    <location>
        <begin position="135"/>
        <end position="157"/>
    </location>
</feature>
<proteinExistence type="inferred from homology"/>
<reference key="1">
    <citation type="journal article" date="2009" name="PLoS Pathog.">
        <title>Molecular evolutionary consequences of niche restriction in Francisella tularensis, a facultative intracellular pathogen.</title>
        <authorList>
            <person name="Larsson P."/>
            <person name="Elfsmark D."/>
            <person name="Svensson K."/>
            <person name="Wikstroem P."/>
            <person name="Forsman M."/>
            <person name="Brettin T."/>
            <person name="Keim P."/>
            <person name="Johansson A."/>
        </authorList>
    </citation>
    <scope>NUCLEOTIDE SEQUENCE [LARGE SCALE GENOMIC DNA]</scope>
    <source>
        <strain>FSC147</strain>
    </source>
</reference>
<gene>
    <name evidence="1" type="primary">smpB</name>
    <name type="ordered locus">FTM_0803</name>
</gene>
<name>SSRP_FRATM</name>
<protein>
    <recommendedName>
        <fullName evidence="1">SsrA-binding protein</fullName>
    </recommendedName>
    <alternativeName>
        <fullName evidence="1">Small protein B</fullName>
    </alternativeName>
</protein>
<evidence type="ECO:0000255" key="1">
    <source>
        <dbReference type="HAMAP-Rule" id="MF_00023"/>
    </source>
</evidence>
<evidence type="ECO:0000256" key="2">
    <source>
        <dbReference type="SAM" id="MobiDB-lite"/>
    </source>
</evidence>
<dbReference type="EMBL" id="CP000915">
    <property type="protein sequence ID" value="ACD30762.1"/>
    <property type="molecule type" value="Genomic_DNA"/>
</dbReference>
<dbReference type="SMR" id="B2SGA3"/>
<dbReference type="KEGG" id="ftm:FTM_0803"/>
<dbReference type="HOGENOM" id="CLU_108953_3_0_6"/>
<dbReference type="GO" id="GO:0005829">
    <property type="term" value="C:cytosol"/>
    <property type="evidence" value="ECO:0007669"/>
    <property type="project" value="TreeGrafter"/>
</dbReference>
<dbReference type="GO" id="GO:0003723">
    <property type="term" value="F:RNA binding"/>
    <property type="evidence" value="ECO:0007669"/>
    <property type="project" value="UniProtKB-UniRule"/>
</dbReference>
<dbReference type="GO" id="GO:0070929">
    <property type="term" value="P:trans-translation"/>
    <property type="evidence" value="ECO:0007669"/>
    <property type="project" value="UniProtKB-UniRule"/>
</dbReference>
<dbReference type="CDD" id="cd09294">
    <property type="entry name" value="SmpB"/>
    <property type="match status" value="1"/>
</dbReference>
<dbReference type="Gene3D" id="2.40.280.10">
    <property type="match status" value="1"/>
</dbReference>
<dbReference type="HAMAP" id="MF_00023">
    <property type="entry name" value="SmpB"/>
    <property type="match status" value="1"/>
</dbReference>
<dbReference type="InterPro" id="IPR023620">
    <property type="entry name" value="SmpB"/>
</dbReference>
<dbReference type="InterPro" id="IPR000037">
    <property type="entry name" value="SsrA-bd_prot"/>
</dbReference>
<dbReference type="InterPro" id="IPR020081">
    <property type="entry name" value="SsrA-bd_prot_CS"/>
</dbReference>
<dbReference type="NCBIfam" id="NF003843">
    <property type="entry name" value="PRK05422.1"/>
    <property type="match status" value="1"/>
</dbReference>
<dbReference type="NCBIfam" id="TIGR00086">
    <property type="entry name" value="smpB"/>
    <property type="match status" value="1"/>
</dbReference>
<dbReference type="PANTHER" id="PTHR30308:SF2">
    <property type="entry name" value="SSRA-BINDING PROTEIN"/>
    <property type="match status" value="1"/>
</dbReference>
<dbReference type="PANTHER" id="PTHR30308">
    <property type="entry name" value="TMRNA-BINDING COMPONENT OF TRANS-TRANSLATION TAGGING COMPLEX"/>
    <property type="match status" value="1"/>
</dbReference>
<dbReference type="Pfam" id="PF01668">
    <property type="entry name" value="SmpB"/>
    <property type="match status" value="1"/>
</dbReference>
<dbReference type="SUPFAM" id="SSF74982">
    <property type="entry name" value="Small protein B (SmpB)"/>
    <property type="match status" value="1"/>
</dbReference>
<dbReference type="PROSITE" id="PS01317">
    <property type="entry name" value="SSRP"/>
    <property type="match status" value="1"/>
</dbReference>
<accession>B2SGA3</accession>
<keyword id="KW-0963">Cytoplasm</keyword>
<keyword id="KW-0694">RNA-binding</keyword>
<sequence length="157" mass="17954">MSKHKVSPATIAKNKKALHDYTILEKFEAGIVLQGWEVKSIRAGKVQMVDSHVHIKHGEAWLFNCLITPLLSASTHVVADAAATRKLLLNRREINKIMGRIEQKGFTCIPLSMYWKGPRVKVEIALAQGKKVHDKRQAQKDKDWAREKDRLFKKAYK</sequence>
<organism>
    <name type="scientific">Francisella tularensis subsp. mediasiatica (strain FSC147)</name>
    <dbReference type="NCBI Taxonomy" id="441952"/>
    <lineage>
        <taxon>Bacteria</taxon>
        <taxon>Pseudomonadati</taxon>
        <taxon>Pseudomonadota</taxon>
        <taxon>Gammaproteobacteria</taxon>
        <taxon>Thiotrichales</taxon>
        <taxon>Francisellaceae</taxon>
        <taxon>Francisella</taxon>
    </lineage>
</organism>
<comment type="function">
    <text evidence="1">Required for rescue of stalled ribosomes mediated by trans-translation. Binds to transfer-messenger RNA (tmRNA), required for stable association of tmRNA with ribosomes. tmRNA and SmpB together mimic tRNA shape, replacing the anticodon stem-loop with SmpB. tmRNA is encoded by the ssrA gene; the 2 termini fold to resemble tRNA(Ala) and it encodes a 'tag peptide', a short internal open reading frame. During trans-translation Ala-aminoacylated tmRNA acts like a tRNA, entering the A-site of stalled ribosomes, displacing the stalled mRNA. The ribosome then switches to translate the ORF on the tmRNA; the nascent peptide is terminated with the 'tag peptide' encoded by the tmRNA and targeted for degradation. The ribosome is freed to recommence translation, which seems to be the essential function of trans-translation.</text>
</comment>
<comment type="subcellular location">
    <subcellularLocation>
        <location evidence="1">Cytoplasm</location>
    </subcellularLocation>
    <text evidence="1">The tmRNA-SmpB complex associates with stalled 70S ribosomes.</text>
</comment>
<comment type="similarity">
    <text evidence="1">Belongs to the SmpB family.</text>
</comment>